<feature type="initiator methionine" description="Removed" evidence="1">
    <location>
        <position position="1"/>
    </location>
</feature>
<feature type="chain" id="PRO_0000228441" description="Formamidopyrimidine-DNA glycosylase">
    <location>
        <begin position="2"/>
        <end position="276"/>
    </location>
</feature>
<feature type="zinc finger region" description="FPG-type" evidence="2">
    <location>
        <begin position="239"/>
        <end position="273"/>
    </location>
</feature>
<feature type="active site" description="Schiff-base intermediate with DNA" evidence="2">
    <location>
        <position position="2"/>
    </location>
</feature>
<feature type="active site" description="Proton donor" evidence="2">
    <location>
        <position position="3"/>
    </location>
</feature>
<feature type="active site" description="Proton donor; for beta-elimination activity" evidence="2">
    <location>
        <position position="58"/>
    </location>
</feature>
<feature type="active site" description="Proton donor; for delta-elimination activity" evidence="2">
    <location>
        <position position="263"/>
    </location>
</feature>
<feature type="binding site" evidence="2">
    <location>
        <position position="92"/>
    </location>
    <ligand>
        <name>DNA</name>
        <dbReference type="ChEBI" id="CHEBI:16991"/>
    </ligand>
</feature>
<feature type="binding site" evidence="2">
    <location>
        <position position="111"/>
    </location>
    <ligand>
        <name>DNA</name>
        <dbReference type="ChEBI" id="CHEBI:16991"/>
    </ligand>
</feature>
<feature type="binding site" evidence="2">
    <location>
        <position position="154"/>
    </location>
    <ligand>
        <name>DNA</name>
        <dbReference type="ChEBI" id="CHEBI:16991"/>
    </ligand>
</feature>
<evidence type="ECO:0000250" key="1"/>
<evidence type="ECO:0000255" key="2">
    <source>
        <dbReference type="HAMAP-Rule" id="MF_00103"/>
    </source>
</evidence>
<gene>
    <name evidence="2" type="primary">mutM</name>
    <name evidence="2" type="synonym">fpg</name>
    <name type="ordered locus">LJ_1650</name>
</gene>
<accession>Q74IB5</accession>
<sequence length="276" mass="31484">MPEMPEVETVRRTLTPLVKGKTIAKIIIWYPKIIVNNPDEFVEKLTNKKILKIDRYGKYLLFRFSDDLTMVSHLRMEGKYHLVTPDHPKGKHEHVEFVFTDGTALRYADVRKFGRMHLVETGTEKQTTGIRHLGPEPNTEEFSVEYFINALSRKKKNIKNTLLDQTVVCGLGNIYVDEVLWQSKIHPLSSAKSIPADKIVDLYHNINHTITVATKERGTTVHTYLDANGDIGGYQNMLQVYGHAGEECNNCGTILEKIKVNGRGTTFCPHCQVLYK</sequence>
<protein>
    <recommendedName>
        <fullName evidence="2">Formamidopyrimidine-DNA glycosylase</fullName>
        <shortName evidence="2">Fapy-DNA glycosylase</shortName>
        <ecNumber evidence="2">3.2.2.23</ecNumber>
    </recommendedName>
    <alternativeName>
        <fullName evidence="2">DNA-(apurinic or apyrimidinic site) lyase MutM</fullName>
        <shortName evidence="2">AP lyase MutM</shortName>
        <ecNumber evidence="2">4.2.99.18</ecNumber>
    </alternativeName>
</protein>
<keyword id="KW-0227">DNA damage</keyword>
<keyword id="KW-0234">DNA repair</keyword>
<keyword id="KW-0238">DNA-binding</keyword>
<keyword id="KW-0326">Glycosidase</keyword>
<keyword id="KW-0378">Hydrolase</keyword>
<keyword id="KW-0456">Lyase</keyword>
<keyword id="KW-0479">Metal-binding</keyword>
<keyword id="KW-0511">Multifunctional enzyme</keyword>
<keyword id="KW-0862">Zinc</keyword>
<keyword id="KW-0863">Zinc-finger</keyword>
<proteinExistence type="inferred from homology"/>
<comment type="function">
    <text evidence="2">Involved in base excision repair of DNA damaged by oxidation or by mutagenic agents. Acts as a DNA glycosylase that recognizes and removes damaged bases. Has a preference for oxidized purines, such as 7,8-dihydro-8-oxoguanine (8-oxoG). Has AP (apurinic/apyrimidinic) lyase activity and introduces nicks in the DNA strand. Cleaves the DNA backbone by beta-delta elimination to generate a single-strand break at the site of the removed base with both 3'- and 5'-phosphates.</text>
</comment>
<comment type="catalytic activity">
    <reaction evidence="2">
        <text>Hydrolysis of DNA containing ring-opened 7-methylguanine residues, releasing 2,6-diamino-4-hydroxy-5-(N-methyl)formamidopyrimidine.</text>
        <dbReference type="EC" id="3.2.2.23"/>
    </reaction>
</comment>
<comment type="catalytic activity">
    <reaction evidence="2">
        <text>2'-deoxyribonucleotide-(2'-deoxyribose 5'-phosphate)-2'-deoxyribonucleotide-DNA = a 3'-end 2'-deoxyribonucleotide-(2,3-dehydro-2,3-deoxyribose 5'-phosphate)-DNA + a 5'-end 5'-phospho-2'-deoxyribonucleoside-DNA + H(+)</text>
        <dbReference type="Rhea" id="RHEA:66592"/>
        <dbReference type="Rhea" id="RHEA-COMP:13180"/>
        <dbReference type="Rhea" id="RHEA-COMP:16897"/>
        <dbReference type="Rhea" id="RHEA-COMP:17067"/>
        <dbReference type="ChEBI" id="CHEBI:15378"/>
        <dbReference type="ChEBI" id="CHEBI:136412"/>
        <dbReference type="ChEBI" id="CHEBI:157695"/>
        <dbReference type="ChEBI" id="CHEBI:167181"/>
        <dbReference type="EC" id="4.2.99.18"/>
    </reaction>
</comment>
<comment type="cofactor">
    <cofactor evidence="2">
        <name>Zn(2+)</name>
        <dbReference type="ChEBI" id="CHEBI:29105"/>
    </cofactor>
    <text evidence="2">Binds 1 zinc ion per subunit.</text>
</comment>
<comment type="subunit">
    <text evidence="2">Monomer.</text>
</comment>
<comment type="similarity">
    <text evidence="2">Belongs to the FPG family.</text>
</comment>
<name>FPG_LACJO</name>
<organism>
    <name type="scientific">Lactobacillus johnsonii (strain CNCM I-12250 / La1 / NCC 533)</name>
    <dbReference type="NCBI Taxonomy" id="257314"/>
    <lineage>
        <taxon>Bacteria</taxon>
        <taxon>Bacillati</taxon>
        <taxon>Bacillota</taxon>
        <taxon>Bacilli</taxon>
        <taxon>Lactobacillales</taxon>
        <taxon>Lactobacillaceae</taxon>
        <taxon>Lactobacillus</taxon>
    </lineage>
</organism>
<reference key="1">
    <citation type="journal article" date="2004" name="Proc. Natl. Acad. Sci. U.S.A.">
        <title>The genome sequence of the probiotic intestinal bacterium Lactobacillus johnsonii NCC 533.</title>
        <authorList>
            <person name="Pridmore R.D."/>
            <person name="Berger B."/>
            <person name="Desiere F."/>
            <person name="Vilanova D."/>
            <person name="Barretto C."/>
            <person name="Pittet A.-C."/>
            <person name="Zwahlen M.-C."/>
            <person name="Rouvet M."/>
            <person name="Altermann E."/>
            <person name="Barrangou R."/>
            <person name="Mollet B."/>
            <person name="Mercenier A."/>
            <person name="Klaenhammer T."/>
            <person name="Arigoni F."/>
            <person name="Schell M.A."/>
        </authorList>
    </citation>
    <scope>NUCLEOTIDE SEQUENCE [LARGE SCALE GENOMIC DNA]</scope>
    <source>
        <strain>CNCM I-1225 / La1 / NCC 533</strain>
    </source>
</reference>
<dbReference type="EC" id="3.2.2.23" evidence="2"/>
<dbReference type="EC" id="4.2.99.18" evidence="2"/>
<dbReference type="EMBL" id="AE017198">
    <property type="protein sequence ID" value="AAS09423.1"/>
    <property type="molecule type" value="Genomic_DNA"/>
</dbReference>
<dbReference type="RefSeq" id="WP_011162339.1">
    <property type="nucleotide sequence ID" value="NC_005362.1"/>
</dbReference>
<dbReference type="SMR" id="Q74IB5"/>
<dbReference type="KEGG" id="ljo:LJ_1650"/>
<dbReference type="eggNOG" id="COG0266">
    <property type="taxonomic scope" value="Bacteria"/>
</dbReference>
<dbReference type="HOGENOM" id="CLU_038423_1_2_9"/>
<dbReference type="Proteomes" id="UP000000581">
    <property type="component" value="Chromosome"/>
</dbReference>
<dbReference type="GO" id="GO:0034039">
    <property type="term" value="F:8-oxo-7,8-dihydroguanine DNA N-glycosylase activity"/>
    <property type="evidence" value="ECO:0007669"/>
    <property type="project" value="TreeGrafter"/>
</dbReference>
<dbReference type="GO" id="GO:0140078">
    <property type="term" value="F:class I DNA-(apurinic or apyrimidinic site) endonuclease activity"/>
    <property type="evidence" value="ECO:0007669"/>
    <property type="project" value="UniProtKB-EC"/>
</dbReference>
<dbReference type="GO" id="GO:0003684">
    <property type="term" value="F:damaged DNA binding"/>
    <property type="evidence" value="ECO:0007669"/>
    <property type="project" value="InterPro"/>
</dbReference>
<dbReference type="GO" id="GO:0008270">
    <property type="term" value="F:zinc ion binding"/>
    <property type="evidence" value="ECO:0007669"/>
    <property type="project" value="UniProtKB-UniRule"/>
</dbReference>
<dbReference type="GO" id="GO:0006284">
    <property type="term" value="P:base-excision repair"/>
    <property type="evidence" value="ECO:0007669"/>
    <property type="project" value="InterPro"/>
</dbReference>
<dbReference type="CDD" id="cd08966">
    <property type="entry name" value="EcFpg-like_N"/>
    <property type="match status" value="1"/>
</dbReference>
<dbReference type="FunFam" id="1.10.8.50:FF:000003">
    <property type="entry name" value="Formamidopyrimidine-DNA glycosylase"/>
    <property type="match status" value="1"/>
</dbReference>
<dbReference type="FunFam" id="3.20.190.10:FF:000001">
    <property type="entry name" value="Formamidopyrimidine-DNA glycosylase"/>
    <property type="match status" value="1"/>
</dbReference>
<dbReference type="Gene3D" id="1.10.8.50">
    <property type="match status" value="1"/>
</dbReference>
<dbReference type="Gene3D" id="3.20.190.10">
    <property type="entry name" value="MutM-like, N-terminal"/>
    <property type="match status" value="1"/>
</dbReference>
<dbReference type="HAMAP" id="MF_00103">
    <property type="entry name" value="Fapy_DNA_glycosyl"/>
    <property type="match status" value="1"/>
</dbReference>
<dbReference type="InterPro" id="IPR015886">
    <property type="entry name" value="DNA_glyclase/AP_lyase_DNA-bd"/>
</dbReference>
<dbReference type="InterPro" id="IPR015887">
    <property type="entry name" value="DNA_glyclase_Znf_dom_DNA_BS"/>
</dbReference>
<dbReference type="InterPro" id="IPR020629">
    <property type="entry name" value="Formamido-pyr_DNA_Glyclase"/>
</dbReference>
<dbReference type="InterPro" id="IPR012319">
    <property type="entry name" value="FPG_cat"/>
</dbReference>
<dbReference type="InterPro" id="IPR035937">
    <property type="entry name" value="MutM-like_N-ter"/>
</dbReference>
<dbReference type="InterPro" id="IPR010979">
    <property type="entry name" value="Ribosomal_uS13-like_H2TH"/>
</dbReference>
<dbReference type="InterPro" id="IPR000214">
    <property type="entry name" value="Znf_DNA_glyclase/AP_lyase"/>
</dbReference>
<dbReference type="InterPro" id="IPR010663">
    <property type="entry name" value="Znf_FPG/IleRS"/>
</dbReference>
<dbReference type="NCBIfam" id="TIGR00577">
    <property type="entry name" value="fpg"/>
    <property type="match status" value="1"/>
</dbReference>
<dbReference type="NCBIfam" id="NF002211">
    <property type="entry name" value="PRK01103.1"/>
    <property type="match status" value="1"/>
</dbReference>
<dbReference type="PANTHER" id="PTHR22993">
    <property type="entry name" value="FORMAMIDOPYRIMIDINE-DNA GLYCOSYLASE"/>
    <property type="match status" value="1"/>
</dbReference>
<dbReference type="PANTHER" id="PTHR22993:SF9">
    <property type="entry name" value="FORMAMIDOPYRIMIDINE-DNA GLYCOSYLASE"/>
    <property type="match status" value="1"/>
</dbReference>
<dbReference type="Pfam" id="PF01149">
    <property type="entry name" value="Fapy_DNA_glyco"/>
    <property type="match status" value="1"/>
</dbReference>
<dbReference type="Pfam" id="PF06831">
    <property type="entry name" value="H2TH"/>
    <property type="match status" value="1"/>
</dbReference>
<dbReference type="Pfam" id="PF06827">
    <property type="entry name" value="zf-FPG_IleRS"/>
    <property type="match status" value="1"/>
</dbReference>
<dbReference type="SMART" id="SM00898">
    <property type="entry name" value="Fapy_DNA_glyco"/>
    <property type="match status" value="1"/>
</dbReference>
<dbReference type="SMART" id="SM01232">
    <property type="entry name" value="H2TH"/>
    <property type="match status" value="1"/>
</dbReference>
<dbReference type="SUPFAM" id="SSF57716">
    <property type="entry name" value="Glucocorticoid receptor-like (DNA-binding domain)"/>
    <property type="match status" value="1"/>
</dbReference>
<dbReference type="SUPFAM" id="SSF81624">
    <property type="entry name" value="N-terminal domain of MutM-like DNA repair proteins"/>
    <property type="match status" value="1"/>
</dbReference>
<dbReference type="SUPFAM" id="SSF46946">
    <property type="entry name" value="S13-like H2TH domain"/>
    <property type="match status" value="1"/>
</dbReference>
<dbReference type="PROSITE" id="PS51068">
    <property type="entry name" value="FPG_CAT"/>
    <property type="match status" value="1"/>
</dbReference>
<dbReference type="PROSITE" id="PS01242">
    <property type="entry name" value="ZF_FPG_1"/>
    <property type="match status" value="1"/>
</dbReference>
<dbReference type="PROSITE" id="PS51066">
    <property type="entry name" value="ZF_FPG_2"/>
    <property type="match status" value="1"/>
</dbReference>